<keyword id="KW-0028">Amino-acid biosynthesis</keyword>
<keyword id="KW-0100">Branched-chain amino acid biosynthesis</keyword>
<keyword id="KW-0432">Leucine biosynthesis</keyword>
<keyword id="KW-0456">Lyase</keyword>
<keyword id="KW-1185">Reference proteome</keyword>
<evidence type="ECO:0000250" key="1"/>
<evidence type="ECO:0000305" key="2"/>
<proteinExistence type="inferred from homology"/>
<accession>Q8ZRI9</accession>
<feature type="chain" id="PRO_0000141876" description="3-isopropylmalate dehydratase small subunit 2">
    <location>
        <begin position="1"/>
        <end position="208"/>
    </location>
</feature>
<name>LEUD2_SALTY</name>
<gene>
    <name type="primary">leuD2</name>
    <name type="ordered locus">STM0330</name>
</gene>
<comment type="function">
    <text evidence="1">Catalyzes the isomerization between 2-isopropylmalate and 3-isopropylmalate, via the formation of 2-isopropylmaleate.</text>
</comment>
<comment type="catalytic activity">
    <reaction>
        <text>(2R,3S)-3-isopropylmalate = (2S)-2-isopropylmalate</text>
        <dbReference type="Rhea" id="RHEA:32287"/>
        <dbReference type="ChEBI" id="CHEBI:1178"/>
        <dbReference type="ChEBI" id="CHEBI:35121"/>
        <dbReference type="EC" id="4.2.1.33"/>
    </reaction>
</comment>
<comment type="pathway">
    <text>Amino-acid biosynthesis; L-leucine biosynthesis; L-leucine from 3-methyl-2-oxobutanoate: step 2/4.</text>
</comment>
<comment type="subunit">
    <text evidence="1">Heterodimer of LeuC and LeuD.</text>
</comment>
<comment type="similarity">
    <text evidence="2">Belongs to the LeuD family. LeuD type 1 subfamily.</text>
</comment>
<sequence>MDTFKQISGRIAPMLEPNIDTDVIMPKQFLKGIDRQGLDKGVFFDRRFMAGGQPNPDFILNMPGWQSATFLLVGPNFGCGSSREHAVWGLKQLGVRGLIGSTFAGIFDDNCQRNGILTVSLDEPALARLAQLAASADTNSITVSLDRCEITTAEETISFVISELKRAMLAAGEDAIAWTLQYLPEIENFEVAHYSRRPWLKRPASPRG</sequence>
<dbReference type="EC" id="4.2.1.33"/>
<dbReference type="EMBL" id="AE006468">
    <property type="protein sequence ID" value="AAL19284.1"/>
    <property type="molecule type" value="Genomic_DNA"/>
</dbReference>
<dbReference type="RefSeq" id="NP_459325.1">
    <property type="nucleotide sequence ID" value="NC_003197.2"/>
</dbReference>
<dbReference type="SMR" id="Q8ZRI9"/>
<dbReference type="STRING" id="99287.STM0330"/>
<dbReference type="PaxDb" id="99287-STM0330"/>
<dbReference type="GeneID" id="1251849"/>
<dbReference type="KEGG" id="stm:STM0330"/>
<dbReference type="PATRIC" id="fig|99287.12.peg.350"/>
<dbReference type="HOGENOM" id="CLU_081378_0_3_6"/>
<dbReference type="OMA" id="NCQRNGV"/>
<dbReference type="PhylomeDB" id="Q8ZRI9"/>
<dbReference type="BioCyc" id="SENT99287:STM0330-MONOMER"/>
<dbReference type="UniPathway" id="UPA00048">
    <property type="reaction ID" value="UER00071"/>
</dbReference>
<dbReference type="Proteomes" id="UP000001014">
    <property type="component" value="Chromosome"/>
</dbReference>
<dbReference type="GO" id="GO:0009316">
    <property type="term" value="C:3-isopropylmalate dehydratase complex"/>
    <property type="evidence" value="ECO:0007669"/>
    <property type="project" value="InterPro"/>
</dbReference>
<dbReference type="GO" id="GO:0003861">
    <property type="term" value="F:3-isopropylmalate dehydratase activity"/>
    <property type="evidence" value="ECO:0007669"/>
    <property type="project" value="UniProtKB-UniRule"/>
</dbReference>
<dbReference type="GO" id="GO:0009098">
    <property type="term" value="P:L-leucine biosynthetic process"/>
    <property type="evidence" value="ECO:0007669"/>
    <property type="project" value="UniProtKB-UniRule"/>
</dbReference>
<dbReference type="CDD" id="cd01577">
    <property type="entry name" value="IPMI_Swivel"/>
    <property type="match status" value="1"/>
</dbReference>
<dbReference type="Gene3D" id="3.20.19.10">
    <property type="entry name" value="Aconitase, domain 4"/>
    <property type="match status" value="1"/>
</dbReference>
<dbReference type="HAMAP" id="MF_01031">
    <property type="entry name" value="LeuD_type1"/>
    <property type="match status" value="1"/>
</dbReference>
<dbReference type="InterPro" id="IPR004431">
    <property type="entry name" value="3-IsopropMal_deHydase_ssu"/>
</dbReference>
<dbReference type="InterPro" id="IPR015928">
    <property type="entry name" value="Aconitase/3IPM_dehydase_swvl"/>
</dbReference>
<dbReference type="InterPro" id="IPR000573">
    <property type="entry name" value="AconitaseA/IPMdHydase_ssu_swvl"/>
</dbReference>
<dbReference type="InterPro" id="IPR033940">
    <property type="entry name" value="IPMI_Swivel"/>
</dbReference>
<dbReference type="InterPro" id="IPR050075">
    <property type="entry name" value="LeuD"/>
</dbReference>
<dbReference type="NCBIfam" id="TIGR00171">
    <property type="entry name" value="leuD"/>
    <property type="match status" value="1"/>
</dbReference>
<dbReference type="NCBIfam" id="NF002458">
    <property type="entry name" value="PRK01641.1"/>
    <property type="match status" value="1"/>
</dbReference>
<dbReference type="PANTHER" id="PTHR43345:SF5">
    <property type="entry name" value="3-ISOPROPYLMALATE DEHYDRATASE SMALL SUBUNIT"/>
    <property type="match status" value="1"/>
</dbReference>
<dbReference type="PANTHER" id="PTHR43345">
    <property type="entry name" value="3-ISOPROPYLMALATE DEHYDRATASE SMALL SUBUNIT 2-RELATED-RELATED"/>
    <property type="match status" value="1"/>
</dbReference>
<dbReference type="Pfam" id="PF00694">
    <property type="entry name" value="Aconitase_C"/>
    <property type="match status" value="1"/>
</dbReference>
<dbReference type="SUPFAM" id="SSF52016">
    <property type="entry name" value="LeuD/IlvD-like"/>
    <property type="match status" value="1"/>
</dbReference>
<reference key="1">
    <citation type="journal article" date="2001" name="Nature">
        <title>Complete genome sequence of Salmonella enterica serovar Typhimurium LT2.</title>
        <authorList>
            <person name="McClelland M."/>
            <person name="Sanderson K.E."/>
            <person name="Spieth J."/>
            <person name="Clifton S.W."/>
            <person name="Latreille P."/>
            <person name="Courtney L."/>
            <person name="Porwollik S."/>
            <person name="Ali J."/>
            <person name="Dante M."/>
            <person name="Du F."/>
            <person name="Hou S."/>
            <person name="Layman D."/>
            <person name="Leonard S."/>
            <person name="Nguyen C."/>
            <person name="Scott K."/>
            <person name="Holmes A."/>
            <person name="Grewal N."/>
            <person name="Mulvaney E."/>
            <person name="Ryan E."/>
            <person name="Sun H."/>
            <person name="Florea L."/>
            <person name="Miller W."/>
            <person name="Stoneking T."/>
            <person name="Nhan M."/>
            <person name="Waterston R."/>
            <person name="Wilson R.K."/>
        </authorList>
    </citation>
    <scope>NUCLEOTIDE SEQUENCE [LARGE SCALE GENOMIC DNA]</scope>
    <source>
        <strain>LT2 / SGSC1412 / ATCC 700720</strain>
    </source>
</reference>
<protein>
    <recommendedName>
        <fullName>3-isopropylmalate dehydratase small subunit 2</fullName>
        <ecNumber>4.2.1.33</ecNumber>
    </recommendedName>
    <alternativeName>
        <fullName>Alpha-IPM isomerase 2</fullName>
        <shortName>IPMI 2</shortName>
    </alternativeName>
    <alternativeName>
        <fullName>Isopropylmalate isomerase 2</fullName>
    </alternativeName>
</protein>
<organism>
    <name type="scientific">Salmonella typhimurium (strain LT2 / SGSC1412 / ATCC 700720)</name>
    <dbReference type="NCBI Taxonomy" id="99287"/>
    <lineage>
        <taxon>Bacteria</taxon>
        <taxon>Pseudomonadati</taxon>
        <taxon>Pseudomonadota</taxon>
        <taxon>Gammaproteobacteria</taxon>
        <taxon>Enterobacterales</taxon>
        <taxon>Enterobacteriaceae</taxon>
        <taxon>Salmonella</taxon>
    </lineage>
</organism>